<feature type="chain" id="PRO_0000206084" description="4'-phosphopantetheinyl transferase AcpT">
    <location>
        <begin position="1"/>
        <end position="192"/>
    </location>
</feature>
<protein>
    <recommendedName>
        <fullName>4'-phosphopantetheinyl transferase AcpT</fullName>
        <ecNumber evidence="1">2.7.8.7</ecNumber>
    </recommendedName>
</protein>
<proteinExistence type="inferred from homology"/>
<name>ACPT_SALTY</name>
<reference key="1">
    <citation type="journal article" date="2001" name="Nature">
        <title>Complete genome sequence of Salmonella enterica serovar Typhimurium LT2.</title>
        <authorList>
            <person name="McClelland M."/>
            <person name="Sanderson K.E."/>
            <person name="Spieth J."/>
            <person name="Clifton S.W."/>
            <person name="Latreille P."/>
            <person name="Courtney L."/>
            <person name="Porwollik S."/>
            <person name="Ali J."/>
            <person name="Dante M."/>
            <person name="Du F."/>
            <person name="Hou S."/>
            <person name="Layman D."/>
            <person name="Leonard S."/>
            <person name="Nguyen C."/>
            <person name="Scott K."/>
            <person name="Holmes A."/>
            <person name="Grewal N."/>
            <person name="Mulvaney E."/>
            <person name="Ryan E."/>
            <person name="Sun H."/>
            <person name="Florea L."/>
            <person name="Miller W."/>
            <person name="Stoneking T."/>
            <person name="Nhan M."/>
            <person name="Waterston R."/>
            <person name="Wilson R.K."/>
        </authorList>
    </citation>
    <scope>NUCLEOTIDE SEQUENCE [LARGE SCALE GENOMIC DNA]</scope>
    <source>
        <strain>LT2 / SGSC1412 / ATCC 700720</strain>
    </source>
</reference>
<organism>
    <name type="scientific">Salmonella typhimurium (strain LT2 / SGSC1412 / ATCC 700720)</name>
    <dbReference type="NCBI Taxonomy" id="99287"/>
    <lineage>
        <taxon>Bacteria</taxon>
        <taxon>Pseudomonadati</taxon>
        <taxon>Pseudomonadota</taxon>
        <taxon>Gammaproteobacteria</taxon>
        <taxon>Enterobacterales</taxon>
        <taxon>Enterobacteriaceae</taxon>
        <taxon>Salmonella</taxon>
    </lineage>
</organism>
<comment type="function">
    <text evidence="1">May be involved in an alternative pathway for phosphopantetheinyl transfer and holo-ACP synthesis. The native apo-protein substrate is unknown.</text>
</comment>
<comment type="catalytic activity">
    <reaction evidence="1">
        <text>apo-[ACP] + CoA = holo-[ACP] + adenosine 3',5'-bisphosphate + H(+)</text>
        <dbReference type="Rhea" id="RHEA:12068"/>
        <dbReference type="Rhea" id="RHEA-COMP:9685"/>
        <dbReference type="Rhea" id="RHEA-COMP:9690"/>
        <dbReference type="ChEBI" id="CHEBI:15378"/>
        <dbReference type="ChEBI" id="CHEBI:29999"/>
        <dbReference type="ChEBI" id="CHEBI:57287"/>
        <dbReference type="ChEBI" id="CHEBI:58343"/>
        <dbReference type="ChEBI" id="CHEBI:64479"/>
        <dbReference type="EC" id="2.7.8.7"/>
    </reaction>
</comment>
<comment type="similarity">
    <text evidence="2">Belongs to the P-Pant transferase superfamily. Gsp/Sfp/HetI/AcpT family.</text>
</comment>
<accession>Q8ZLE2</accession>
<keyword id="KW-1185">Reference proteome</keyword>
<keyword id="KW-0808">Transferase</keyword>
<gene>
    <name type="primary">acpT</name>
    <name type="ordered locus">STM3583</name>
</gene>
<evidence type="ECO:0000250" key="1">
    <source>
        <dbReference type="UniProtKB" id="P37623"/>
    </source>
</evidence>
<evidence type="ECO:0000305" key="2"/>
<dbReference type="EC" id="2.7.8.7" evidence="1"/>
<dbReference type="EMBL" id="AE006468">
    <property type="protein sequence ID" value="AAL22443.1"/>
    <property type="molecule type" value="Genomic_DNA"/>
</dbReference>
<dbReference type="RefSeq" id="NP_462484.1">
    <property type="nucleotide sequence ID" value="NC_003197.2"/>
</dbReference>
<dbReference type="RefSeq" id="WP_000285376.1">
    <property type="nucleotide sequence ID" value="NC_003197.2"/>
</dbReference>
<dbReference type="SMR" id="Q8ZLE2"/>
<dbReference type="STRING" id="99287.STM3583"/>
<dbReference type="PaxDb" id="99287-STM3583"/>
<dbReference type="GeneID" id="1255106"/>
<dbReference type="KEGG" id="stm:STM3583"/>
<dbReference type="PATRIC" id="fig|99287.12.peg.3786"/>
<dbReference type="HOGENOM" id="CLU_119926_0_0_6"/>
<dbReference type="OMA" id="WQIVSID"/>
<dbReference type="PhylomeDB" id="Q8ZLE2"/>
<dbReference type="BioCyc" id="SENT99287:STM3583-MONOMER"/>
<dbReference type="Proteomes" id="UP000001014">
    <property type="component" value="Chromosome"/>
</dbReference>
<dbReference type="GO" id="GO:0005829">
    <property type="term" value="C:cytosol"/>
    <property type="evidence" value="ECO:0000318"/>
    <property type="project" value="GO_Central"/>
</dbReference>
<dbReference type="GO" id="GO:0008897">
    <property type="term" value="F:holo-[acyl-carrier-protein] synthase activity"/>
    <property type="evidence" value="ECO:0000318"/>
    <property type="project" value="GO_Central"/>
</dbReference>
<dbReference type="GO" id="GO:0000287">
    <property type="term" value="F:magnesium ion binding"/>
    <property type="evidence" value="ECO:0007669"/>
    <property type="project" value="InterPro"/>
</dbReference>
<dbReference type="GO" id="GO:0019878">
    <property type="term" value="P:lysine biosynthetic process via aminoadipic acid"/>
    <property type="evidence" value="ECO:0000318"/>
    <property type="project" value="GO_Central"/>
</dbReference>
<dbReference type="FunFam" id="3.90.470.20:FF:000004">
    <property type="entry name" value="Holo-(Acyl carrier protein) synthase 2"/>
    <property type="match status" value="1"/>
</dbReference>
<dbReference type="Gene3D" id="3.90.470.20">
    <property type="entry name" value="4'-phosphopantetheinyl transferase domain"/>
    <property type="match status" value="1"/>
</dbReference>
<dbReference type="InterPro" id="IPR008278">
    <property type="entry name" value="4-PPantetheinyl_Trfase_dom"/>
</dbReference>
<dbReference type="InterPro" id="IPR037143">
    <property type="entry name" value="4-PPantetheinyl_Trfase_dom_sf"/>
</dbReference>
<dbReference type="InterPro" id="IPR050559">
    <property type="entry name" value="P-Pant_transferase_sf"/>
</dbReference>
<dbReference type="NCBIfam" id="NF007676">
    <property type="entry name" value="PRK10351.1"/>
    <property type="match status" value="1"/>
</dbReference>
<dbReference type="PANTHER" id="PTHR12215:SF10">
    <property type="entry name" value="L-AMINOADIPATE-SEMIALDEHYDE DEHYDROGENASE-PHOSPHOPANTETHEINYL TRANSFERASE"/>
    <property type="match status" value="1"/>
</dbReference>
<dbReference type="PANTHER" id="PTHR12215">
    <property type="entry name" value="PHOSPHOPANTETHEINE TRANSFERASE"/>
    <property type="match status" value="1"/>
</dbReference>
<dbReference type="Pfam" id="PF01648">
    <property type="entry name" value="ACPS"/>
    <property type="match status" value="1"/>
</dbReference>
<dbReference type="SUPFAM" id="SSF56214">
    <property type="entry name" value="4'-phosphopantetheinyl transferase"/>
    <property type="match status" value="2"/>
</dbReference>
<sequence length="192" mass="20799">MYQVVLGKVSTLSAGQLPDALIAQAPQGVRRASWLAGRVLLSRALSPLPEMVYGEQGKPAFSAGAPLWFNLSHSGDTIALLLSDEGEVGCDIEVIRPRDNWRSLANAVFSLGEHAEMEAERPEQQLAAFWRIWTRKEAIVKQRGGSAWQIVSVDSTLPSALSVSQCQLDTLSLAVCTPTPFTLTPQTITKAL</sequence>